<keyword id="KW-0963">Cytoplasm</keyword>
<keyword id="KW-0448">Lipopolysaccharide biosynthesis</keyword>
<keyword id="KW-0548">Nucleotidyltransferase</keyword>
<keyword id="KW-0808">Transferase</keyword>
<name>KDSB_ACIBS</name>
<protein>
    <recommendedName>
        <fullName evidence="1">3-deoxy-manno-octulosonate cytidylyltransferase</fullName>
        <ecNumber evidence="1">2.7.7.38</ecNumber>
    </recommendedName>
    <alternativeName>
        <fullName evidence="1">CMP-2-keto-3-deoxyoctulosonic acid synthase</fullName>
        <shortName evidence="1">CKS</shortName>
        <shortName evidence="1">CMP-KDO synthase</shortName>
    </alternativeName>
</protein>
<dbReference type="EC" id="2.7.7.38" evidence="1"/>
<dbReference type="EMBL" id="CU468230">
    <property type="protein sequence ID" value="CAP01063.1"/>
    <property type="molecule type" value="Genomic_DNA"/>
</dbReference>
<dbReference type="SMR" id="B0VMY7"/>
<dbReference type="KEGG" id="abm:ABSDF1724"/>
<dbReference type="HOGENOM" id="CLU_065038_1_0_6"/>
<dbReference type="UniPathway" id="UPA00030"/>
<dbReference type="UniPathway" id="UPA00358">
    <property type="reaction ID" value="UER00476"/>
</dbReference>
<dbReference type="Proteomes" id="UP000001741">
    <property type="component" value="Chromosome"/>
</dbReference>
<dbReference type="GO" id="GO:0005829">
    <property type="term" value="C:cytosol"/>
    <property type="evidence" value="ECO:0007669"/>
    <property type="project" value="TreeGrafter"/>
</dbReference>
<dbReference type="GO" id="GO:0008690">
    <property type="term" value="F:3-deoxy-manno-octulosonate cytidylyltransferase activity"/>
    <property type="evidence" value="ECO:0007669"/>
    <property type="project" value="UniProtKB-UniRule"/>
</dbReference>
<dbReference type="GO" id="GO:0033468">
    <property type="term" value="P:CMP-keto-3-deoxy-D-manno-octulosonic acid biosynthetic process"/>
    <property type="evidence" value="ECO:0007669"/>
    <property type="project" value="UniProtKB-UniRule"/>
</dbReference>
<dbReference type="GO" id="GO:0009103">
    <property type="term" value="P:lipopolysaccharide biosynthetic process"/>
    <property type="evidence" value="ECO:0007669"/>
    <property type="project" value="UniProtKB-UniRule"/>
</dbReference>
<dbReference type="CDD" id="cd02517">
    <property type="entry name" value="CMP-KDO-Synthetase"/>
    <property type="match status" value="1"/>
</dbReference>
<dbReference type="FunFam" id="3.90.550.10:FF:000011">
    <property type="entry name" value="3-deoxy-manno-octulosonate cytidylyltransferase"/>
    <property type="match status" value="1"/>
</dbReference>
<dbReference type="Gene3D" id="3.90.550.10">
    <property type="entry name" value="Spore Coat Polysaccharide Biosynthesis Protein SpsA, Chain A"/>
    <property type="match status" value="1"/>
</dbReference>
<dbReference type="HAMAP" id="MF_00057">
    <property type="entry name" value="KdsB"/>
    <property type="match status" value="1"/>
</dbReference>
<dbReference type="InterPro" id="IPR003329">
    <property type="entry name" value="Cytidylyl_trans"/>
</dbReference>
<dbReference type="InterPro" id="IPR004528">
    <property type="entry name" value="KdsB"/>
</dbReference>
<dbReference type="InterPro" id="IPR029044">
    <property type="entry name" value="Nucleotide-diphossugar_trans"/>
</dbReference>
<dbReference type="NCBIfam" id="TIGR00466">
    <property type="entry name" value="kdsB"/>
    <property type="match status" value="1"/>
</dbReference>
<dbReference type="NCBIfam" id="NF003950">
    <property type="entry name" value="PRK05450.1-3"/>
    <property type="match status" value="1"/>
</dbReference>
<dbReference type="NCBIfam" id="NF003952">
    <property type="entry name" value="PRK05450.1-5"/>
    <property type="match status" value="1"/>
</dbReference>
<dbReference type="NCBIfam" id="NF009905">
    <property type="entry name" value="PRK13368.1"/>
    <property type="match status" value="1"/>
</dbReference>
<dbReference type="PANTHER" id="PTHR42866">
    <property type="entry name" value="3-DEOXY-MANNO-OCTULOSONATE CYTIDYLYLTRANSFERASE"/>
    <property type="match status" value="1"/>
</dbReference>
<dbReference type="PANTHER" id="PTHR42866:SF2">
    <property type="entry name" value="3-DEOXY-MANNO-OCTULOSONATE CYTIDYLYLTRANSFERASE, MITOCHONDRIAL"/>
    <property type="match status" value="1"/>
</dbReference>
<dbReference type="Pfam" id="PF02348">
    <property type="entry name" value="CTP_transf_3"/>
    <property type="match status" value="1"/>
</dbReference>
<dbReference type="SUPFAM" id="SSF53448">
    <property type="entry name" value="Nucleotide-diphospho-sugar transferases"/>
    <property type="match status" value="1"/>
</dbReference>
<evidence type="ECO:0000255" key="1">
    <source>
        <dbReference type="HAMAP-Rule" id="MF_00057"/>
    </source>
</evidence>
<gene>
    <name evidence="1" type="primary">kdsB</name>
    <name type="ordered locus">ABSDF1724</name>
</gene>
<comment type="function">
    <text evidence="1">Activates KDO (a required 8-carbon sugar) for incorporation into bacterial lipopolysaccharide in Gram-negative bacteria.</text>
</comment>
<comment type="catalytic activity">
    <reaction evidence="1">
        <text>3-deoxy-alpha-D-manno-oct-2-ulosonate + CTP = CMP-3-deoxy-beta-D-manno-octulosonate + diphosphate</text>
        <dbReference type="Rhea" id="RHEA:23448"/>
        <dbReference type="ChEBI" id="CHEBI:33019"/>
        <dbReference type="ChEBI" id="CHEBI:37563"/>
        <dbReference type="ChEBI" id="CHEBI:85986"/>
        <dbReference type="ChEBI" id="CHEBI:85987"/>
        <dbReference type="EC" id="2.7.7.38"/>
    </reaction>
</comment>
<comment type="pathway">
    <text evidence="1">Nucleotide-sugar biosynthesis; CMP-3-deoxy-D-manno-octulosonate biosynthesis; CMP-3-deoxy-D-manno-octulosonate from 3-deoxy-D-manno-octulosonate and CTP: step 1/1.</text>
</comment>
<comment type="pathway">
    <text evidence="1">Bacterial outer membrane biogenesis; lipopolysaccharide biosynthesis.</text>
</comment>
<comment type="subcellular location">
    <subcellularLocation>
        <location evidence="1">Cytoplasm</location>
    </subcellularLocation>
</comment>
<comment type="similarity">
    <text evidence="1">Belongs to the KdsB family.</text>
</comment>
<organism>
    <name type="scientific">Acinetobacter baumannii (strain SDF)</name>
    <dbReference type="NCBI Taxonomy" id="509170"/>
    <lineage>
        <taxon>Bacteria</taxon>
        <taxon>Pseudomonadati</taxon>
        <taxon>Pseudomonadota</taxon>
        <taxon>Gammaproteobacteria</taxon>
        <taxon>Moraxellales</taxon>
        <taxon>Moraxellaceae</taxon>
        <taxon>Acinetobacter</taxon>
        <taxon>Acinetobacter calcoaceticus/baumannii complex</taxon>
    </lineage>
</organism>
<feature type="chain" id="PRO_0000369987" description="3-deoxy-manno-octulosonate cytidylyltransferase">
    <location>
        <begin position="1"/>
        <end position="253"/>
    </location>
</feature>
<reference key="1">
    <citation type="journal article" date="2008" name="PLoS ONE">
        <title>Comparative analysis of Acinetobacters: three genomes for three lifestyles.</title>
        <authorList>
            <person name="Vallenet D."/>
            <person name="Nordmann P."/>
            <person name="Barbe V."/>
            <person name="Poirel L."/>
            <person name="Mangenot S."/>
            <person name="Bataille E."/>
            <person name="Dossat C."/>
            <person name="Gas S."/>
            <person name="Kreimeyer A."/>
            <person name="Lenoble P."/>
            <person name="Oztas S."/>
            <person name="Poulain J."/>
            <person name="Segurens B."/>
            <person name="Robert C."/>
            <person name="Abergel C."/>
            <person name="Claverie J.-M."/>
            <person name="Raoult D."/>
            <person name="Medigue C."/>
            <person name="Weissenbach J."/>
            <person name="Cruveiller S."/>
        </authorList>
    </citation>
    <scope>NUCLEOTIDE SEQUENCE [LARGE SCALE GENOMIC DNA]</scope>
    <source>
        <strain>SDF</strain>
    </source>
</reference>
<sequence>MKHIVIPARFSSSRLPGKPLLLIHDRPMILRVVDQAKKVEGFDDLCVATDDERIAEICRAEGVDVVLTSADHPSGTDRLSEVARIKGWDADDIIVNVQGDEPLLPAQLVQQVAKLLVDKPNCSMSTLCEPIHALDEFQRDSIVKVVMSKQNEALYFSRATIPYDRDSAKQAEPTLHSQAFRHLGLYAYRVSLLQEYVTWEMGKLEKLESLEQLRVLENGHRIAIAVAEANLPPGVDTQADLDRLNNMPVESFE</sequence>
<proteinExistence type="inferred from homology"/>
<accession>B0VMY7</accession>